<gene>
    <name evidence="1" type="primary">ybeY</name>
    <name type="ordered locus">BLi02723</name>
    <name type="ordered locus">BL03671</name>
</gene>
<accession>Q65H70</accession>
<accession>Q62SM7</accession>
<evidence type="ECO:0000255" key="1">
    <source>
        <dbReference type="HAMAP-Rule" id="MF_00009"/>
    </source>
</evidence>
<comment type="function">
    <text evidence="1">Single strand-specific metallo-endoribonuclease involved in late-stage 70S ribosome quality control and in maturation of the 3' terminus of the 16S rRNA.</text>
</comment>
<comment type="cofactor">
    <cofactor evidence="1">
        <name>Zn(2+)</name>
        <dbReference type="ChEBI" id="CHEBI:29105"/>
    </cofactor>
    <text evidence="1">Binds 1 zinc ion.</text>
</comment>
<comment type="subcellular location">
    <subcellularLocation>
        <location evidence="1">Cytoplasm</location>
    </subcellularLocation>
</comment>
<comment type="similarity">
    <text evidence="1">Belongs to the endoribonuclease YbeY family.</text>
</comment>
<sequence length="158" mass="17761">MSLILDITDETGRVPEDRLAEIEKLLQFAAAEEGVADGAEVSVTIVNNEEIQKINKEYRGKDYPTDVISFALEEDGEGEVEIIGADMPPVLGDIIISVDKAREQAEEYGHSLMRELGFLTVHGFLHLLGYDHMTEEEEKEMFTKQKEILNRYGLSRSS</sequence>
<keyword id="KW-0963">Cytoplasm</keyword>
<keyword id="KW-0255">Endonuclease</keyword>
<keyword id="KW-0378">Hydrolase</keyword>
<keyword id="KW-0479">Metal-binding</keyword>
<keyword id="KW-0540">Nuclease</keyword>
<keyword id="KW-1185">Reference proteome</keyword>
<keyword id="KW-0690">Ribosome biogenesis</keyword>
<keyword id="KW-0698">rRNA processing</keyword>
<keyword id="KW-0862">Zinc</keyword>
<dbReference type="EC" id="3.1.-.-" evidence="1"/>
<dbReference type="EMBL" id="AE017333">
    <property type="protein sequence ID" value="AAU41594.1"/>
    <property type="molecule type" value="Genomic_DNA"/>
</dbReference>
<dbReference type="EMBL" id="CP000002">
    <property type="protein sequence ID" value="AAU24232.1"/>
    <property type="molecule type" value="Genomic_DNA"/>
</dbReference>
<dbReference type="RefSeq" id="WP_003183635.1">
    <property type="nucleotide sequence ID" value="NC_006322.1"/>
</dbReference>
<dbReference type="SMR" id="Q65H70"/>
<dbReference type="STRING" id="279010.BL03671"/>
<dbReference type="GeneID" id="92860686"/>
<dbReference type="KEGG" id="bld:BLi02723"/>
<dbReference type="KEGG" id="bli:BL03671"/>
<dbReference type="eggNOG" id="COG0319">
    <property type="taxonomic scope" value="Bacteria"/>
</dbReference>
<dbReference type="HOGENOM" id="CLU_106710_3_0_9"/>
<dbReference type="Proteomes" id="UP000000606">
    <property type="component" value="Chromosome"/>
</dbReference>
<dbReference type="GO" id="GO:0005737">
    <property type="term" value="C:cytoplasm"/>
    <property type="evidence" value="ECO:0007669"/>
    <property type="project" value="UniProtKB-SubCell"/>
</dbReference>
<dbReference type="GO" id="GO:0004222">
    <property type="term" value="F:metalloendopeptidase activity"/>
    <property type="evidence" value="ECO:0007669"/>
    <property type="project" value="InterPro"/>
</dbReference>
<dbReference type="GO" id="GO:0004521">
    <property type="term" value="F:RNA endonuclease activity"/>
    <property type="evidence" value="ECO:0007669"/>
    <property type="project" value="UniProtKB-UniRule"/>
</dbReference>
<dbReference type="GO" id="GO:0008270">
    <property type="term" value="F:zinc ion binding"/>
    <property type="evidence" value="ECO:0007669"/>
    <property type="project" value="UniProtKB-UniRule"/>
</dbReference>
<dbReference type="GO" id="GO:0006364">
    <property type="term" value="P:rRNA processing"/>
    <property type="evidence" value="ECO:0007669"/>
    <property type="project" value="UniProtKB-UniRule"/>
</dbReference>
<dbReference type="Gene3D" id="3.40.390.30">
    <property type="entry name" value="Metalloproteases ('zincins'), catalytic domain"/>
    <property type="match status" value="1"/>
</dbReference>
<dbReference type="HAMAP" id="MF_00009">
    <property type="entry name" value="Endoribonucl_YbeY"/>
    <property type="match status" value="1"/>
</dbReference>
<dbReference type="InterPro" id="IPR023091">
    <property type="entry name" value="MetalPrtase_cat_dom_sf_prd"/>
</dbReference>
<dbReference type="InterPro" id="IPR002036">
    <property type="entry name" value="YbeY"/>
</dbReference>
<dbReference type="InterPro" id="IPR020549">
    <property type="entry name" value="YbeY_CS"/>
</dbReference>
<dbReference type="NCBIfam" id="TIGR00043">
    <property type="entry name" value="rRNA maturation RNase YbeY"/>
    <property type="match status" value="1"/>
</dbReference>
<dbReference type="PANTHER" id="PTHR46986">
    <property type="entry name" value="ENDORIBONUCLEASE YBEY, CHLOROPLASTIC"/>
    <property type="match status" value="1"/>
</dbReference>
<dbReference type="PANTHER" id="PTHR46986:SF1">
    <property type="entry name" value="ENDORIBONUCLEASE YBEY, CHLOROPLASTIC"/>
    <property type="match status" value="1"/>
</dbReference>
<dbReference type="Pfam" id="PF02130">
    <property type="entry name" value="YbeY"/>
    <property type="match status" value="1"/>
</dbReference>
<dbReference type="SUPFAM" id="SSF55486">
    <property type="entry name" value="Metalloproteases ('zincins'), catalytic domain"/>
    <property type="match status" value="1"/>
</dbReference>
<dbReference type="PROSITE" id="PS01306">
    <property type="entry name" value="UPF0054"/>
    <property type="match status" value="1"/>
</dbReference>
<name>YBEY_BACLD</name>
<protein>
    <recommendedName>
        <fullName evidence="1">Endoribonuclease YbeY</fullName>
        <ecNumber evidence="1">3.1.-.-</ecNumber>
    </recommendedName>
</protein>
<feature type="chain" id="PRO_0000102409" description="Endoribonuclease YbeY">
    <location>
        <begin position="1"/>
        <end position="158"/>
    </location>
</feature>
<feature type="binding site" evidence="1">
    <location>
        <position position="122"/>
    </location>
    <ligand>
        <name>Zn(2+)</name>
        <dbReference type="ChEBI" id="CHEBI:29105"/>
        <note>catalytic</note>
    </ligand>
</feature>
<feature type="binding site" evidence="1">
    <location>
        <position position="126"/>
    </location>
    <ligand>
        <name>Zn(2+)</name>
        <dbReference type="ChEBI" id="CHEBI:29105"/>
        <note>catalytic</note>
    </ligand>
</feature>
<feature type="binding site" evidence="1">
    <location>
        <position position="132"/>
    </location>
    <ligand>
        <name>Zn(2+)</name>
        <dbReference type="ChEBI" id="CHEBI:29105"/>
        <note>catalytic</note>
    </ligand>
</feature>
<organism>
    <name type="scientific">Bacillus licheniformis (strain ATCC 14580 / DSM 13 / JCM 2505 / CCUG 7422 / NBRC 12200 / NCIMB 9375 / NCTC 10341 / NRRL NRS-1264 / Gibson 46)</name>
    <dbReference type="NCBI Taxonomy" id="279010"/>
    <lineage>
        <taxon>Bacteria</taxon>
        <taxon>Bacillati</taxon>
        <taxon>Bacillota</taxon>
        <taxon>Bacilli</taxon>
        <taxon>Bacillales</taxon>
        <taxon>Bacillaceae</taxon>
        <taxon>Bacillus</taxon>
    </lineage>
</organism>
<reference key="1">
    <citation type="journal article" date="2004" name="J. Mol. Microbiol. Biotechnol.">
        <title>The complete genome sequence of Bacillus licheniformis DSM13, an organism with great industrial potential.</title>
        <authorList>
            <person name="Veith B."/>
            <person name="Herzberg C."/>
            <person name="Steckel S."/>
            <person name="Feesche J."/>
            <person name="Maurer K.H."/>
            <person name="Ehrenreich P."/>
            <person name="Baeumer S."/>
            <person name="Henne A."/>
            <person name="Liesegang H."/>
            <person name="Merkl R."/>
            <person name="Ehrenreich A."/>
            <person name="Gottschalk G."/>
        </authorList>
    </citation>
    <scope>NUCLEOTIDE SEQUENCE [LARGE SCALE GENOMIC DNA]</scope>
    <source>
        <strain>ATCC 14580 / DSM 13 / JCM 2505 / CCUG 7422 / NBRC 12200 / NCIMB 9375 / NCTC 10341 / NRRL NRS-1264 / Gibson 46</strain>
    </source>
</reference>
<reference key="2">
    <citation type="journal article" date="2004" name="Genome Biol.">
        <title>Complete genome sequence of the industrial bacterium Bacillus licheniformis and comparisons with closely related Bacillus species.</title>
        <authorList>
            <person name="Rey M.W."/>
            <person name="Ramaiya P."/>
            <person name="Nelson B.A."/>
            <person name="Brody-Karpin S.D."/>
            <person name="Zaretsky E.J."/>
            <person name="Tang M."/>
            <person name="Lopez de Leon A."/>
            <person name="Xiang H."/>
            <person name="Gusti V."/>
            <person name="Clausen I.G."/>
            <person name="Olsen P.B."/>
            <person name="Rasmussen M.D."/>
            <person name="Andersen J.T."/>
            <person name="Joergensen P.L."/>
            <person name="Larsen T.S."/>
            <person name="Sorokin A."/>
            <person name="Bolotin A."/>
            <person name="Lapidus A."/>
            <person name="Galleron N."/>
            <person name="Ehrlich S.D."/>
            <person name="Berka R.M."/>
        </authorList>
    </citation>
    <scope>NUCLEOTIDE SEQUENCE [LARGE SCALE GENOMIC DNA]</scope>
    <source>
        <strain>ATCC 14580 / DSM 13 / JCM 2505 / CCUG 7422 / NBRC 12200 / NCIMB 9375 / NCTC 10341 / NRRL NRS-1264 / Gibson 46</strain>
    </source>
</reference>
<proteinExistence type="inferred from homology"/>